<proteinExistence type="inferred from homology"/>
<sequence>MPTINQLVRKGREKVEKKSKAPALQGNPQKRGVCVRVYTTTPKKPNSALRKVARVRLSNGYEVTCYIPGIGHNLQEHSIVLVRGGRVKDLPGVRYKIIRGALDAAGVKDRKQSRSKYGAKRPKPGQAAATTGKKK</sequence>
<evidence type="ECO:0000250" key="1"/>
<evidence type="ECO:0000255" key="2">
    <source>
        <dbReference type="HAMAP-Rule" id="MF_00403"/>
    </source>
</evidence>
<evidence type="ECO:0000256" key="3">
    <source>
        <dbReference type="SAM" id="MobiDB-lite"/>
    </source>
</evidence>
<evidence type="ECO:0000305" key="4"/>
<comment type="function">
    <text evidence="2">With S4 and S5 plays an important role in translational accuracy.</text>
</comment>
<comment type="function">
    <text evidence="2">Interacts with and stabilizes bases of the 16S rRNA that are involved in tRNA selection in the A site and with the mRNA backbone. Located at the interface of the 30S and 50S subunits, it traverses the body of the 30S subunit contacting proteins on the other side and probably holding the rRNA structure together. The combined cluster of proteins S8, S12 and S17 appears to hold together the shoulder and platform of the 30S subunit.</text>
</comment>
<comment type="subunit">
    <text evidence="2">Part of the 30S ribosomal subunit. Contacts proteins S8 and S17. May interact with IF1 in the 30S initiation complex.</text>
</comment>
<comment type="similarity">
    <text evidence="2">Belongs to the universal ribosomal protein uS12 family.</text>
</comment>
<organism>
    <name type="scientific">Sulfurihydrogenibium sp. (strain YO3AOP1)</name>
    <dbReference type="NCBI Taxonomy" id="436114"/>
    <lineage>
        <taxon>Bacteria</taxon>
        <taxon>Pseudomonadati</taxon>
        <taxon>Aquificota</taxon>
        <taxon>Aquificia</taxon>
        <taxon>Aquificales</taxon>
        <taxon>Hydrogenothermaceae</taxon>
        <taxon>Sulfurihydrogenibium</taxon>
    </lineage>
</organism>
<dbReference type="EMBL" id="CP001080">
    <property type="protein sequence ID" value="ACD65941.1"/>
    <property type="molecule type" value="Genomic_DNA"/>
</dbReference>
<dbReference type="RefSeq" id="WP_012459029.1">
    <property type="nucleotide sequence ID" value="NC_010730.1"/>
</dbReference>
<dbReference type="SMR" id="B2V7L8"/>
<dbReference type="STRING" id="436114.SYO3AOP1_0296"/>
<dbReference type="KEGG" id="sul:SYO3AOP1_0296"/>
<dbReference type="eggNOG" id="COG0048">
    <property type="taxonomic scope" value="Bacteria"/>
</dbReference>
<dbReference type="HOGENOM" id="CLU_104295_1_2_0"/>
<dbReference type="GO" id="GO:0015935">
    <property type="term" value="C:small ribosomal subunit"/>
    <property type="evidence" value="ECO:0007669"/>
    <property type="project" value="InterPro"/>
</dbReference>
<dbReference type="GO" id="GO:0019843">
    <property type="term" value="F:rRNA binding"/>
    <property type="evidence" value="ECO:0007669"/>
    <property type="project" value="UniProtKB-UniRule"/>
</dbReference>
<dbReference type="GO" id="GO:0003735">
    <property type="term" value="F:structural constituent of ribosome"/>
    <property type="evidence" value="ECO:0007669"/>
    <property type="project" value="InterPro"/>
</dbReference>
<dbReference type="GO" id="GO:0000049">
    <property type="term" value="F:tRNA binding"/>
    <property type="evidence" value="ECO:0007669"/>
    <property type="project" value="UniProtKB-UniRule"/>
</dbReference>
<dbReference type="GO" id="GO:0006412">
    <property type="term" value="P:translation"/>
    <property type="evidence" value="ECO:0007669"/>
    <property type="project" value="UniProtKB-UniRule"/>
</dbReference>
<dbReference type="CDD" id="cd03368">
    <property type="entry name" value="Ribosomal_S12"/>
    <property type="match status" value="1"/>
</dbReference>
<dbReference type="FunFam" id="2.40.50.140:FF:000001">
    <property type="entry name" value="30S ribosomal protein S12"/>
    <property type="match status" value="1"/>
</dbReference>
<dbReference type="Gene3D" id="2.40.50.140">
    <property type="entry name" value="Nucleic acid-binding proteins"/>
    <property type="match status" value="1"/>
</dbReference>
<dbReference type="HAMAP" id="MF_00403_B">
    <property type="entry name" value="Ribosomal_uS12_B"/>
    <property type="match status" value="1"/>
</dbReference>
<dbReference type="InterPro" id="IPR012340">
    <property type="entry name" value="NA-bd_OB-fold"/>
</dbReference>
<dbReference type="InterPro" id="IPR006032">
    <property type="entry name" value="Ribosomal_uS12"/>
</dbReference>
<dbReference type="InterPro" id="IPR005679">
    <property type="entry name" value="Ribosomal_uS12_bac"/>
</dbReference>
<dbReference type="NCBIfam" id="TIGR00981">
    <property type="entry name" value="rpsL_bact"/>
    <property type="match status" value="1"/>
</dbReference>
<dbReference type="PANTHER" id="PTHR11652">
    <property type="entry name" value="30S RIBOSOMAL PROTEIN S12 FAMILY MEMBER"/>
    <property type="match status" value="1"/>
</dbReference>
<dbReference type="Pfam" id="PF00164">
    <property type="entry name" value="Ribosom_S12_S23"/>
    <property type="match status" value="1"/>
</dbReference>
<dbReference type="PIRSF" id="PIRSF002133">
    <property type="entry name" value="Ribosomal_S12/S23"/>
    <property type="match status" value="1"/>
</dbReference>
<dbReference type="PRINTS" id="PR01034">
    <property type="entry name" value="RIBOSOMALS12"/>
</dbReference>
<dbReference type="SUPFAM" id="SSF50249">
    <property type="entry name" value="Nucleic acid-binding proteins"/>
    <property type="match status" value="1"/>
</dbReference>
<dbReference type="PROSITE" id="PS00055">
    <property type="entry name" value="RIBOSOMAL_S12"/>
    <property type="match status" value="1"/>
</dbReference>
<gene>
    <name evidence="2" type="primary">rpsL</name>
    <name type="ordered locus">SYO3AOP1_0296</name>
</gene>
<feature type="chain" id="PRO_1000123527" description="Small ribosomal subunit protein uS12">
    <location>
        <begin position="1"/>
        <end position="135"/>
    </location>
</feature>
<feature type="region of interest" description="Disordered" evidence="3">
    <location>
        <begin position="1"/>
        <end position="29"/>
    </location>
</feature>
<feature type="region of interest" description="Disordered" evidence="3">
    <location>
        <begin position="106"/>
        <end position="135"/>
    </location>
</feature>
<feature type="compositionally biased region" description="Basic residues" evidence="3">
    <location>
        <begin position="113"/>
        <end position="123"/>
    </location>
</feature>
<feature type="modified residue" description="3-methylthioaspartic acid" evidence="1">
    <location>
        <position position="89"/>
    </location>
</feature>
<reference key="1">
    <citation type="journal article" date="2009" name="J. Bacteriol.">
        <title>Complete and draft genome sequences of six members of the Aquificales.</title>
        <authorList>
            <person name="Reysenbach A.-L."/>
            <person name="Hamamura N."/>
            <person name="Podar M."/>
            <person name="Griffiths E."/>
            <person name="Ferreira S."/>
            <person name="Hochstein R."/>
            <person name="Heidelberg J."/>
            <person name="Johnson J."/>
            <person name="Mead D."/>
            <person name="Pohorille A."/>
            <person name="Sarmiento M."/>
            <person name="Schweighofer K."/>
            <person name="Seshadri R."/>
            <person name="Voytek M.A."/>
        </authorList>
    </citation>
    <scope>NUCLEOTIDE SEQUENCE [LARGE SCALE GENOMIC DNA]</scope>
    <source>
        <strain>YO3AOP1</strain>
    </source>
</reference>
<accession>B2V7L8</accession>
<protein>
    <recommendedName>
        <fullName evidence="2">Small ribosomal subunit protein uS12</fullName>
    </recommendedName>
    <alternativeName>
        <fullName evidence="4">30S ribosomal protein S12</fullName>
    </alternativeName>
</protein>
<name>RS12_SULSY</name>
<keyword id="KW-0488">Methylation</keyword>
<keyword id="KW-0687">Ribonucleoprotein</keyword>
<keyword id="KW-0689">Ribosomal protein</keyword>
<keyword id="KW-0694">RNA-binding</keyword>
<keyword id="KW-0699">rRNA-binding</keyword>
<keyword id="KW-0820">tRNA-binding</keyword>